<sequence>MAAESDVLSEIEVLQSIYLDELNVTQNDEGGWTVSLVLHPSTAEDCLSQFVRLTLTMDLDSQYPYSSPYISIHNPRGLSDDKLLSLQKSLQMEAEECVGTPVLYQLIERAKEILTDSNIPHGNCVICLYDFKEGEVFTKTSCYHYFHSHCLGRYITHSEMELKDRERELEEDKTRDRTEEEELAVVCPVCRESLTYDLDALLSSPAPVLCQQEDAVIGGEFKKKWEALQKILERQKEKGGVIDPEAESNRFLIHINEAPVNLSDTPGMTDSSGAESSQSLPSSSPDSTSTTQTSQNQHTAGQPQRKHTGDFKRGRRGRGAGRGGPARHMVPAPGEERLGKHIQSSDKINSANSGPTNTTSQVESTAQRQACELSENTAQLRQPLTNEENKPVSQDMLTSEPKDGQEVSQQKECISKEVTQTILQEGHPEREHVGRGDKRGSRGSARHHGHWQDRNYKGPGHWDNSGSAGHRGGAYRTREGGAGRGHRGGGAYRGGGRGMHQRVEKEFRKEGVL</sequence>
<name>RNF25_DANRE</name>
<dbReference type="EC" id="2.3.2.27" evidence="1"/>
<dbReference type="EMBL" id="AL928885">
    <property type="status" value="NOT_ANNOTATED_CDS"/>
    <property type="molecule type" value="Genomic_DNA"/>
</dbReference>
<dbReference type="EMBL" id="BC155751">
    <property type="protein sequence ID" value="AAI55752.1"/>
    <property type="molecule type" value="mRNA"/>
</dbReference>
<dbReference type="EMBL" id="BX571714">
    <property type="status" value="NOT_ANNOTATED_CDS"/>
    <property type="molecule type" value="Genomic_DNA"/>
</dbReference>
<dbReference type="EMBL" id="BC055571">
    <property type="protein sequence ID" value="AAH55571.1"/>
    <property type="molecule type" value="mRNA"/>
</dbReference>
<dbReference type="RefSeq" id="NP_957477.1">
    <property type="nucleotide sequence ID" value="NM_201183.1"/>
</dbReference>
<dbReference type="SMR" id="Q7SXJ6"/>
<dbReference type="Ensembl" id="ENSDART00000039466">
    <property type="protein sequence ID" value="ENSDARP00000038815"/>
    <property type="gene ID" value="ENSDARG00000027182"/>
</dbReference>
<dbReference type="GeneID" id="100003846"/>
<dbReference type="KEGG" id="dre:100003846"/>
<dbReference type="AGR" id="ZFIN:ZDB-GENE-040426-1581"/>
<dbReference type="CTD" id="64320"/>
<dbReference type="ZFIN" id="ZDB-GENE-040426-1581">
    <property type="gene designation" value="rnf25"/>
</dbReference>
<dbReference type="HOGENOM" id="CLU_039732_0_0_1"/>
<dbReference type="OMA" id="MHPKTET"/>
<dbReference type="OrthoDB" id="432311at2759"/>
<dbReference type="PhylomeDB" id="Q7SXJ6"/>
<dbReference type="TreeFam" id="TF324097"/>
<dbReference type="Reactome" id="R-DRE-983168">
    <property type="pathway name" value="Antigen processing: Ubiquitination &amp; Proteasome degradation"/>
</dbReference>
<dbReference type="UniPathway" id="UPA00143"/>
<dbReference type="PRO" id="PR:Q7SXJ6"/>
<dbReference type="Proteomes" id="UP000000437">
    <property type="component" value="Alternate scaffold 3"/>
</dbReference>
<dbReference type="Proteomes" id="UP000000437">
    <property type="component" value="Chromosome 3"/>
</dbReference>
<dbReference type="GO" id="GO:0005737">
    <property type="term" value="C:cytoplasm"/>
    <property type="evidence" value="ECO:0007669"/>
    <property type="project" value="UniProtKB-SubCell"/>
</dbReference>
<dbReference type="GO" id="GO:0005634">
    <property type="term" value="C:nucleus"/>
    <property type="evidence" value="ECO:0000318"/>
    <property type="project" value="GO_Central"/>
</dbReference>
<dbReference type="GO" id="GO:0061630">
    <property type="term" value="F:ubiquitin protein ligase activity"/>
    <property type="evidence" value="ECO:0000250"/>
    <property type="project" value="UniProtKB"/>
</dbReference>
<dbReference type="GO" id="GO:0008270">
    <property type="term" value="F:zinc ion binding"/>
    <property type="evidence" value="ECO:0007669"/>
    <property type="project" value="UniProtKB-KW"/>
</dbReference>
<dbReference type="GO" id="GO:0090263">
    <property type="term" value="P:positive regulation of canonical Wnt signaling pathway"/>
    <property type="evidence" value="ECO:0000315"/>
    <property type="project" value="ZFIN"/>
</dbReference>
<dbReference type="GO" id="GO:0016567">
    <property type="term" value="P:protein ubiquitination"/>
    <property type="evidence" value="ECO:0007669"/>
    <property type="project" value="UniProtKB-UniPathway"/>
</dbReference>
<dbReference type="GO" id="GO:0072344">
    <property type="term" value="P:rescue of stalled ribosome"/>
    <property type="evidence" value="ECO:0000250"/>
    <property type="project" value="UniProtKB"/>
</dbReference>
<dbReference type="GO" id="GO:0006511">
    <property type="term" value="P:ubiquitin-dependent protein catabolic process"/>
    <property type="evidence" value="ECO:0000318"/>
    <property type="project" value="GO_Central"/>
</dbReference>
<dbReference type="CDD" id="cd16470">
    <property type="entry name" value="RING-H2_RNF25"/>
    <property type="match status" value="1"/>
</dbReference>
<dbReference type="CDD" id="cd23818">
    <property type="entry name" value="RWD_RNF25"/>
    <property type="match status" value="1"/>
</dbReference>
<dbReference type="FunFam" id="3.30.40.10:FF:000215">
    <property type="entry name" value="E3 ubiquitin-protein ligase RNF25"/>
    <property type="match status" value="1"/>
</dbReference>
<dbReference type="FunFam" id="3.10.110.10:FF:000052">
    <property type="entry name" value="Putative e3 ubiquitin-protein ligase rnf25"/>
    <property type="match status" value="1"/>
</dbReference>
<dbReference type="Gene3D" id="3.10.110.10">
    <property type="entry name" value="Ubiquitin Conjugating Enzyme"/>
    <property type="match status" value="1"/>
</dbReference>
<dbReference type="Gene3D" id="3.30.40.10">
    <property type="entry name" value="Zinc/RING finger domain, C3HC4 (zinc finger)"/>
    <property type="match status" value="1"/>
</dbReference>
<dbReference type="InterPro" id="IPR039133">
    <property type="entry name" value="RNF25"/>
</dbReference>
<dbReference type="InterPro" id="IPR006575">
    <property type="entry name" value="RWD_dom"/>
</dbReference>
<dbReference type="InterPro" id="IPR016135">
    <property type="entry name" value="UBQ-conjugating_enzyme/RWD"/>
</dbReference>
<dbReference type="InterPro" id="IPR001841">
    <property type="entry name" value="Znf_RING"/>
</dbReference>
<dbReference type="InterPro" id="IPR013083">
    <property type="entry name" value="Znf_RING/FYVE/PHD"/>
</dbReference>
<dbReference type="PANTHER" id="PTHR13198:SF4">
    <property type="entry name" value="E3 UBIQUITIN-PROTEIN LIGASE RNF25"/>
    <property type="match status" value="1"/>
</dbReference>
<dbReference type="PANTHER" id="PTHR13198">
    <property type="entry name" value="RING FINGER PROTEIN 25"/>
    <property type="match status" value="1"/>
</dbReference>
<dbReference type="Pfam" id="PF05773">
    <property type="entry name" value="RWD"/>
    <property type="match status" value="1"/>
</dbReference>
<dbReference type="Pfam" id="PF17123">
    <property type="entry name" value="zf-RING_11"/>
    <property type="match status" value="1"/>
</dbReference>
<dbReference type="SMART" id="SM00184">
    <property type="entry name" value="RING"/>
    <property type="match status" value="1"/>
</dbReference>
<dbReference type="SMART" id="SM00591">
    <property type="entry name" value="RWD"/>
    <property type="match status" value="1"/>
</dbReference>
<dbReference type="SUPFAM" id="SSF57850">
    <property type="entry name" value="RING/U-box"/>
    <property type="match status" value="1"/>
</dbReference>
<dbReference type="SUPFAM" id="SSF54495">
    <property type="entry name" value="UBC-like"/>
    <property type="match status" value="1"/>
</dbReference>
<dbReference type="PROSITE" id="PS50908">
    <property type="entry name" value="RWD"/>
    <property type="match status" value="1"/>
</dbReference>
<dbReference type="PROSITE" id="PS50089">
    <property type="entry name" value="ZF_RING_2"/>
    <property type="match status" value="1"/>
</dbReference>
<gene>
    <name evidence="6" type="primary">rnf25</name>
</gene>
<protein>
    <recommendedName>
        <fullName evidence="7">E3 ubiquitin-protein ligase RNF25</fullName>
        <ecNumber evidence="1">2.3.2.27</ecNumber>
    </recommendedName>
    <alternativeName>
        <fullName evidence="7">RING finger protein 25</fullName>
    </alternativeName>
    <alternativeName>
        <fullName evidence="6">RING finger protein AO7</fullName>
    </alternativeName>
</protein>
<proteinExistence type="evidence at protein level"/>
<accession>Q7SXJ6</accession>
<feature type="chain" id="PRO_0000458096" description="E3 ubiquitin-protein ligase RNF25">
    <location>
        <begin position="1"/>
        <end position="513"/>
    </location>
</feature>
<feature type="domain" description="RWD" evidence="3">
    <location>
        <begin position="9"/>
        <end position="117"/>
    </location>
</feature>
<feature type="zinc finger region" description="RING-type; atypical" evidence="2">
    <location>
        <begin position="124"/>
        <end position="191"/>
    </location>
</feature>
<feature type="region of interest" description="Disordered" evidence="4">
    <location>
        <begin position="261"/>
        <end position="513"/>
    </location>
</feature>
<feature type="compositionally biased region" description="Low complexity" evidence="4">
    <location>
        <begin position="271"/>
        <end position="297"/>
    </location>
</feature>
<feature type="compositionally biased region" description="Polar residues" evidence="4">
    <location>
        <begin position="345"/>
        <end position="397"/>
    </location>
</feature>
<feature type="compositionally biased region" description="Polar residues" evidence="4">
    <location>
        <begin position="406"/>
        <end position="423"/>
    </location>
</feature>
<feature type="compositionally biased region" description="Basic and acidic residues" evidence="4">
    <location>
        <begin position="426"/>
        <end position="440"/>
    </location>
</feature>
<feature type="compositionally biased region" description="Gly residues" evidence="4">
    <location>
        <begin position="482"/>
        <end position="498"/>
    </location>
</feature>
<feature type="compositionally biased region" description="Basic and acidic residues" evidence="4">
    <location>
        <begin position="501"/>
        <end position="513"/>
    </location>
</feature>
<feature type="binding site" evidence="1">
    <location>
        <position position="124"/>
    </location>
    <ligand>
        <name>Zn(2+)</name>
        <dbReference type="ChEBI" id="CHEBI:29105"/>
        <label>1</label>
    </ligand>
</feature>
<feature type="binding site" evidence="1">
    <location>
        <position position="127"/>
    </location>
    <ligand>
        <name>Zn(2+)</name>
        <dbReference type="ChEBI" id="CHEBI:29105"/>
        <label>1</label>
    </ligand>
</feature>
<feature type="binding site" evidence="1">
    <location>
        <position position="142"/>
    </location>
    <ligand>
        <name>Zn(2+)</name>
        <dbReference type="ChEBI" id="CHEBI:29105"/>
        <label>2</label>
    </ligand>
</feature>
<feature type="binding site" evidence="1">
    <location>
        <position position="144"/>
    </location>
    <ligand>
        <name>Zn(2+)</name>
        <dbReference type="ChEBI" id="CHEBI:29105"/>
        <label>2</label>
    </ligand>
</feature>
<feature type="binding site" evidence="1">
    <location>
        <position position="147"/>
    </location>
    <ligand>
        <name>Zn(2+)</name>
        <dbReference type="ChEBI" id="CHEBI:29105"/>
        <label>1</label>
    </ligand>
</feature>
<feature type="binding site" evidence="1">
    <location>
        <position position="150"/>
    </location>
    <ligand>
        <name>Zn(2+)</name>
        <dbReference type="ChEBI" id="CHEBI:29105"/>
        <label>1</label>
    </ligand>
</feature>
<feature type="binding site" evidence="1">
    <location>
        <position position="187"/>
    </location>
    <ligand>
        <name>Zn(2+)</name>
        <dbReference type="ChEBI" id="CHEBI:29105"/>
        <label>2</label>
    </ligand>
</feature>
<feature type="binding site" evidence="1">
    <location>
        <position position="190"/>
    </location>
    <ligand>
        <name>Zn(2+)</name>
        <dbReference type="ChEBI" id="CHEBI:29105"/>
        <label>2</label>
    </ligand>
</feature>
<feature type="mutagenesis site" description="Loss of activity." evidence="5">
    <original>CVIC</original>
    <variation>AVIA</variation>
    <location>
        <begin position="124"/>
        <end position="127"/>
    </location>
</feature>
<feature type="sequence conflict" description="In Ref. 2; AAH55571." evidence="7" ref="2">
    <original>S</original>
    <variation>T</variation>
    <location>
        <position position="277"/>
    </location>
</feature>
<feature type="sequence conflict" description="In Ref. 2; AAH55571." evidence="7" ref="2">
    <original>T</original>
    <variation>I</variation>
    <location>
        <position position="291"/>
    </location>
</feature>
<feature type="sequence conflict" description="In Ref. 2; AAH55571." evidence="7" ref="2">
    <original>E</original>
    <variation>G</variation>
    <location>
        <position position="335"/>
    </location>
</feature>
<feature type="sequence conflict" description="In Ref. 2; AAH55571." evidence="7" ref="2">
    <original>E</original>
    <variation>G</variation>
    <location>
        <position position="400"/>
    </location>
</feature>
<evidence type="ECO:0000250" key="1">
    <source>
        <dbReference type="UniProtKB" id="Q96BH1"/>
    </source>
</evidence>
<evidence type="ECO:0000255" key="2">
    <source>
        <dbReference type="PROSITE-ProRule" id="PRU00175"/>
    </source>
</evidence>
<evidence type="ECO:0000255" key="3">
    <source>
        <dbReference type="PROSITE-ProRule" id="PRU00179"/>
    </source>
</evidence>
<evidence type="ECO:0000256" key="4">
    <source>
        <dbReference type="SAM" id="MobiDB-lite"/>
    </source>
</evidence>
<evidence type="ECO:0000269" key="5">
    <source>
    </source>
</evidence>
<evidence type="ECO:0000303" key="6">
    <source>
    </source>
</evidence>
<evidence type="ECO:0000305" key="7"/>
<comment type="function">
    <text evidence="1 5">E3 ubiquitin-protein ligase that plays a key role in the RNF14-RNF25 translation quality control pathway, a pathway that takes place when a ribosome has stalled during translation, and which promotes ubiquitination and degradation of translation factors on stalled ribosomes (By similarity). May also acts as a positive regulator of the Wnt signaling (PubMed:27007149).</text>
</comment>
<comment type="catalytic activity">
    <reaction evidence="1">
        <text>S-ubiquitinyl-[E2 ubiquitin-conjugating enzyme]-L-cysteine + [acceptor protein]-L-lysine = [E2 ubiquitin-conjugating enzyme]-L-cysteine + N(6)-ubiquitinyl-[acceptor protein]-L-lysine.</text>
        <dbReference type="EC" id="2.3.2.27"/>
    </reaction>
</comment>
<comment type="pathway">
    <text evidence="1">Protein modification; protein ubiquitination.</text>
</comment>
<comment type="subcellular location">
    <subcellularLocation>
        <location evidence="5">Cytoplasm</location>
    </subcellularLocation>
</comment>
<comment type="similarity">
    <text evidence="7">Belongs to the RNF25 family.</text>
</comment>
<organism>
    <name type="scientific">Danio rerio</name>
    <name type="common">Zebrafish</name>
    <name type="synonym">Brachydanio rerio</name>
    <dbReference type="NCBI Taxonomy" id="7955"/>
    <lineage>
        <taxon>Eukaryota</taxon>
        <taxon>Metazoa</taxon>
        <taxon>Chordata</taxon>
        <taxon>Craniata</taxon>
        <taxon>Vertebrata</taxon>
        <taxon>Euteleostomi</taxon>
        <taxon>Actinopterygii</taxon>
        <taxon>Neopterygii</taxon>
        <taxon>Teleostei</taxon>
        <taxon>Ostariophysi</taxon>
        <taxon>Cypriniformes</taxon>
        <taxon>Danionidae</taxon>
        <taxon>Danioninae</taxon>
        <taxon>Danio</taxon>
    </lineage>
</organism>
<reference key="1">
    <citation type="journal article" date="2013" name="Nature">
        <title>The zebrafish reference genome sequence and its relationship to the human genome.</title>
        <authorList>
            <person name="Howe K."/>
            <person name="Clark M.D."/>
            <person name="Torroja C.F."/>
            <person name="Torrance J."/>
            <person name="Berthelot C."/>
            <person name="Muffato M."/>
            <person name="Collins J.E."/>
            <person name="Humphray S."/>
            <person name="McLaren K."/>
            <person name="Matthews L."/>
            <person name="McLaren S."/>
            <person name="Sealy I."/>
            <person name="Caccamo M."/>
            <person name="Churcher C."/>
            <person name="Scott C."/>
            <person name="Barrett J.C."/>
            <person name="Koch R."/>
            <person name="Rauch G.J."/>
            <person name="White S."/>
            <person name="Chow W."/>
            <person name="Kilian B."/>
            <person name="Quintais L.T."/>
            <person name="Guerra-Assuncao J.A."/>
            <person name="Zhou Y."/>
            <person name="Gu Y."/>
            <person name="Yen J."/>
            <person name="Vogel J.H."/>
            <person name="Eyre T."/>
            <person name="Redmond S."/>
            <person name="Banerjee R."/>
            <person name="Chi J."/>
            <person name="Fu B."/>
            <person name="Langley E."/>
            <person name="Maguire S.F."/>
            <person name="Laird G.K."/>
            <person name="Lloyd D."/>
            <person name="Kenyon E."/>
            <person name="Donaldson S."/>
            <person name="Sehra H."/>
            <person name="Almeida-King J."/>
            <person name="Loveland J."/>
            <person name="Trevanion S."/>
            <person name="Jones M."/>
            <person name="Quail M."/>
            <person name="Willey D."/>
            <person name="Hunt A."/>
            <person name="Burton J."/>
            <person name="Sims S."/>
            <person name="McLay K."/>
            <person name="Plumb B."/>
            <person name="Davis J."/>
            <person name="Clee C."/>
            <person name="Oliver K."/>
            <person name="Clark R."/>
            <person name="Riddle C."/>
            <person name="Elliot D."/>
            <person name="Threadgold G."/>
            <person name="Harden G."/>
            <person name="Ware D."/>
            <person name="Begum S."/>
            <person name="Mortimore B."/>
            <person name="Kerry G."/>
            <person name="Heath P."/>
            <person name="Phillimore B."/>
            <person name="Tracey A."/>
            <person name="Corby N."/>
            <person name="Dunn M."/>
            <person name="Johnson C."/>
            <person name="Wood J."/>
            <person name="Clark S."/>
            <person name="Pelan S."/>
            <person name="Griffiths G."/>
            <person name="Smith M."/>
            <person name="Glithero R."/>
            <person name="Howden P."/>
            <person name="Barker N."/>
            <person name="Lloyd C."/>
            <person name="Stevens C."/>
            <person name="Harley J."/>
            <person name="Holt K."/>
            <person name="Panagiotidis G."/>
            <person name="Lovell J."/>
            <person name="Beasley H."/>
            <person name="Henderson C."/>
            <person name="Gordon D."/>
            <person name="Auger K."/>
            <person name="Wright D."/>
            <person name="Collins J."/>
            <person name="Raisen C."/>
            <person name="Dyer L."/>
            <person name="Leung K."/>
            <person name="Robertson L."/>
            <person name="Ambridge K."/>
            <person name="Leongamornlert D."/>
            <person name="McGuire S."/>
            <person name="Gilderthorp R."/>
            <person name="Griffiths C."/>
            <person name="Manthravadi D."/>
            <person name="Nichol S."/>
            <person name="Barker G."/>
            <person name="Whitehead S."/>
            <person name="Kay M."/>
            <person name="Brown J."/>
            <person name="Murnane C."/>
            <person name="Gray E."/>
            <person name="Humphries M."/>
            <person name="Sycamore N."/>
            <person name="Barker D."/>
            <person name="Saunders D."/>
            <person name="Wallis J."/>
            <person name="Babbage A."/>
            <person name="Hammond S."/>
            <person name="Mashreghi-Mohammadi M."/>
            <person name="Barr L."/>
            <person name="Martin S."/>
            <person name="Wray P."/>
            <person name="Ellington A."/>
            <person name="Matthews N."/>
            <person name="Ellwood M."/>
            <person name="Woodmansey R."/>
            <person name="Clark G."/>
            <person name="Cooper J."/>
            <person name="Tromans A."/>
            <person name="Grafham D."/>
            <person name="Skuce C."/>
            <person name="Pandian R."/>
            <person name="Andrews R."/>
            <person name="Harrison E."/>
            <person name="Kimberley A."/>
            <person name="Garnett J."/>
            <person name="Fosker N."/>
            <person name="Hall R."/>
            <person name="Garner P."/>
            <person name="Kelly D."/>
            <person name="Bird C."/>
            <person name="Palmer S."/>
            <person name="Gehring I."/>
            <person name="Berger A."/>
            <person name="Dooley C.M."/>
            <person name="Ersan-Urun Z."/>
            <person name="Eser C."/>
            <person name="Geiger H."/>
            <person name="Geisler M."/>
            <person name="Karotki L."/>
            <person name="Kirn A."/>
            <person name="Konantz J."/>
            <person name="Konantz M."/>
            <person name="Oberlander M."/>
            <person name="Rudolph-Geiger S."/>
            <person name="Teucke M."/>
            <person name="Lanz C."/>
            <person name="Raddatz G."/>
            <person name="Osoegawa K."/>
            <person name="Zhu B."/>
            <person name="Rapp A."/>
            <person name="Widaa S."/>
            <person name="Langford C."/>
            <person name="Yang F."/>
            <person name="Schuster S.C."/>
            <person name="Carter N.P."/>
            <person name="Harrow J."/>
            <person name="Ning Z."/>
            <person name="Herrero J."/>
            <person name="Searle S.M."/>
            <person name="Enright A."/>
            <person name="Geisler R."/>
            <person name="Plasterk R.H."/>
            <person name="Lee C."/>
            <person name="Westerfield M."/>
            <person name="de Jong P.J."/>
            <person name="Zon L.I."/>
            <person name="Postlethwait J.H."/>
            <person name="Nusslein-Volhard C."/>
            <person name="Hubbard T.J."/>
            <person name="Roest Crollius H."/>
            <person name="Rogers J."/>
            <person name="Stemple D.L."/>
        </authorList>
    </citation>
    <scope>NUCLEOTIDE SEQUENCE [LARGE SCALE GENOMIC DNA]</scope>
    <source>
        <strain>Tuebingen</strain>
    </source>
</reference>
<reference key="2">
    <citation type="submission" date="2003-08" db="EMBL/GenBank/DDBJ databases">
        <authorList>
            <consortium name="NIH - Zebrafish Gene Collection (ZGC) project"/>
        </authorList>
    </citation>
    <scope>NUCLEOTIDE SEQUENCE [LARGE SCALE MRNA]</scope>
</reference>
<reference key="3">
    <citation type="journal article" date="2016" name="Oncotarget">
        <title>Rnf25/AO7 positively regulates wnt signaling via disrupting Nkd1-Axin inhibitory complex independent of its ubiquitin ligase activity.</title>
        <authorList>
            <person name="Gao R."/>
            <person name="Ma L.Q."/>
            <person name="Du X."/>
            <person name="Zhang T.T."/>
            <person name="Zhao L."/>
            <person name="Liu L."/>
            <person name="Liu J.C."/>
            <person name="Guo F."/>
            <person name="Cheng Z."/>
            <person name="Huang H."/>
        </authorList>
    </citation>
    <scope>FUNCTION</scope>
    <scope>SUBCELLULAR LOCATION</scope>
    <scope>MUTAGENESIS OF 124-CYS--CYS-127</scope>
</reference>
<keyword id="KW-0963">Cytoplasm</keyword>
<keyword id="KW-0479">Metal-binding</keyword>
<keyword id="KW-1185">Reference proteome</keyword>
<keyword id="KW-0808">Transferase</keyword>
<keyword id="KW-0833">Ubl conjugation pathway</keyword>
<keyword id="KW-0862">Zinc</keyword>
<keyword id="KW-0863">Zinc-finger</keyword>